<keyword id="KW-0997">Cell inner membrane</keyword>
<keyword id="KW-1003">Cell membrane</keyword>
<keyword id="KW-0472">Membrane</keyword>
<keyword id="KW-0520">NAD</keyword>
<keyword id="KW-0874">Quinone</keyword>
<keyword id="KW-1278">Translocase</keyword>
<keyword id="KW-0812">Transmembrane</keyword>
<keyword id="KW-1133">Transmembrane helix</keyword>
<keyword id="KW-0813">Transport</keyword>
<keyword id="KW-0830">Ubiquinone</keyword>
<dbReference type="EC" id="7.1.1.-" evidence="1"/>
<dbReference type="EMBL" id="CP001144">
    <property type="protein sequence ID" value="ACH75481.1"/>
    <property type="molecule type" value="Genomic_DNA"/>
</dbReference>
<dbReference type="RefSeq" id="WP_000062993.1">
    <property type="nucleotide sequence ID" value="NC_011205.1"/>
</dbReference>
<dbReference type="SMR" id="B5FPG9"/>
<dbReference type="GeneID" id="66756777"/>
<dbReference type="KEGG" id="sed:SeD_A2674"/>
<dbReference type="HOGENOM" id="CLU_119549_2_0_6"/>
<dbReference type="Proteomes" id="UP000008322">
    <property type="component" value="Chromosome"/>
</dbReference>
<dbReference type="GO" id="GO:0030964">
    <property type="term" value="C:NADH dehydrogenase complex"/>
    <property type="evidence" value="ECO:0007669"/>
    <property type="project" value="TreeGrafter"/>
</dbReference>
<dbReference type="GO" id="GO:0005886">
    <property type="term" value="C:plasma membrane"/>
    <property type="evidence" value="ECO:0007669"/>
    <property type="project" value="UniProtKB-SubCell"/>
</dbReference>
<dbReference type="GO" id="GO:0008137">
    <property type="term" value="F:NADH dehydrogenase (ubiquinone) activity"/>
    <property type="evidence" value="ECO:0007669"/>
    <property type="project" value="InterPro"/>
</dbReference>
<dbReference type="GO" id="GO:0050136">
    <property type="term" value="F:NADH:ubiquinone reductase (non-electrogenic) activity"/>
    <property type="evidence" value="ECO:0007669"/>
    <property type="project" value="UniProtKB-UniRule"/>
</dbReference>
<dbReference type="GO" id="GO:0048038">
    <property type="term" value="F:quinone binding"/>
    <property type="evidence" value="ECO:0007669"/>
    <property type="project" value="UniProtKB-KW"/>
</dbReference>
<dbReference type="FunFam" id="1.20.58.1610:FF:000003">
    <property type="entry name" value="NADH-quinone oxidoreductase subunit A"/>
    <property type="match status" value="1"/>
</dbReference>
<dbReference type="Gene3D" id="1.20.58.1610">
    <property type="entry name" value="NADH:ubiquinone/plastoquinone oxidoreductase, chain 3"/>
    <property type="match status" value="1"/>
</dbReference>
<dbReference type="HAMAP" id="MF_01394">
    <property type="entry name" value="NDH1_NuoA"/>
    <property type="match status" value="1"/>
</dbReference>
<dbReference type="InterPro" id="IPR023043">
    <property type="entry name" value="NAD(P)H_OxRDtase_bac/plastid"/>
</dbReference>
<dbReference type="InterPro" id="IPR000440">
    <property type="entry name" value="NADH_UbQ/plastoQ_OxRdtase_su3"/>
</dbReference>
<dbReference type="InterPro" id="IPR038430">
    <property type="entry name" value="NDAH_ubi_oxred_su3_sf"/>
</dbReference>
<dbReference type="PANTHER" id="PTHR11058:SF21">
    <property type="entry name" value="NADH-QUINONE OXIDOREDUCTASE SUBUNIT A"/>
    <property type="match status" value="1"/>
</dbReference>
<dbReference type="PANTHER" id="PTHR11058">
    <property type="entry name" value="NADH-UBIQUINONE OXIDOREDUCTASE CHAIN 3"/>
    <property type="match status" value="1"/>
</dbReference>
<dbReference type="Pfam" id="PF00507">
    <property type="entry name" value="Oxidored_q4"/>
    <property type="match status" value="1"/>
</dbReference>
<comment type="function">
    <text evidence="1">NDH-1 shuttles electrons from NADH, via FMN and iron-sulfur (Fe-S) centers, to quinones in the respiratory chain. The immediate electron acceptor for the enzyme in this species is believed to be ubiquinone. Couples the redox reaction to proton translocation (for every two electrons transferred, four hydrogen ions are translocated across the cytoplasmic membrane), and thus conserves the redox energy in a proton gradient.</text>
</comment>
<comment type="catalytic activity">
    <reaction evidence="1">
        <text>a quinone + NADH + 5 H(+)(in) = a quinol + NAD(+) + 4 H(+)(out)</text>
        <dbReference type="Rhea" id="RHEA:57888"/>
        <dbReference type="ChEBI" id="CHEBI:15378"/>
        <dbReference type="ChEBI" id="CHEBI:24646"/>
        <dbReference type="ChEBI" id="CHEBI:57540"/>
        <dbReference type="ChEBI" id="CHEBI:57945"/>
        <dbReference type="ChEBI" id="CHEBI:132124"/>
    </reaction>
</comment>
<comment type="subunit">
    <text evidence="1">NDH-1 is composed of 13 different subunits. Subunits NuoA, H, J, K, L, M, N constitute the membrane sector of the complex.</text>
</comment>
<comment type="subcellular location">
    <subcellularLocation>
        <location evidence="1">Cell inner membrane</location>
        <topology evidence="1">Multi-pass membrane protein</topology>
    </subcellularLocation>
</comment>
<comment type="similarity">
    <text evidence="1">Belongs to the complex I subunit 3 family.</text>
</comment>
<accession>B5FPG9</accession>
<protein>
    <recommendedName>
        <fullName evidence="1">NADH-quinone oxidoreductase subunit A</fullName>
        <ecNumber evidence="1">7.1.1.-</ecNumber>
    </recommendedName>
    <alternativeName>
        <fullName evidence="1">NADH dehydrogenase I subunit A</fullName>
    </alternativeName>
    <alternativeName>
        <fullName evidence="1">NDH-1 subunit A</fullName>
    </alternativeName>
    <alternativeName>
        <fullName evidence="1">NUO1</fullName>
    </alternativeName>
</protein>
<organism>
    <name type="scientific">Salmonella dublin (strain CT_02021853)</name>
    <dbReference type="NCBI Taxonomy" id="439851"/>
    <lineage>
        <taxon>Bacteria</taxon>
        <taxon>Pseudomonadati</taxon>
        <taxon>Pseudomonadota</taxon>
        <taxon>Gammaproteobacteria</taxon>
        <taxon>Enterobacterales</taxon>
        <taxon>Enterobacteriaceae</taxon>
        <taxon>Salmonella</taxon>
    </lineage>
</organism>
<sequence>MSMSTSTEVIAHHWAFAIFLIVAIGLCCLMLVGGWFLGGRARARHKNVPFESGIDSVGTARLRLSAKFYLVAMFFVIFDVEALYLFAWSTSIRESGWVGFVEAAIFIFVLLAGLVYLARIGALDWTPARSRRERMNPETNSIANRQR</sequence>
<evidence type="ECO:0000255" key="1">
    <source>
        <dbReference type="HAMAP-Rule" id="MF_01394"/>
    </source>
</evidence>
<gene>
    <name evidence="1" type="primary">nuoA</name>
    <name type="ordered locus">SeD_A2674</name>
</gene>
<name>NUOA_SALDC</name>
<feature type="chain" id="PRO_0000362766" description="NADH-quinone oxidoreductase subunit A">
    <location>
        <begin position="1"/>
        <end position="147"/>
    </location>
</feature>
<feature type="transmembrane region" description="Helical" evidence="1">
    <location>
        <begin position="16"/>
        <end position="36"/>
    </location>
</feature>
<feature type="transmembrane region" description="Helical" evidence="1">
    <location>
        <begin position="68"/>
        <end position="88"/>
    </location>
</feature>
<feature type="transmembrane region" description="Helical" evidence="1">
    <location>
        <begin position="97"/>
        <end position="117"/>
    </location>
</feature>
<reference key="1">
    <citation type="journal article" date="2011" name="J. Bacteriol.">
        <title>Comparative genomics of 28 Salmonella enterica isolates: evidence for CRISPR-mediated adaptive sublineage evolution.</title>
        <authorList>
            <person name="Fricke W.F."/>
            <person name="Mammel M.K."/>
            <person name="McDermott P.F."/>
            <person name="Tartera C."/>
            <person name="White D.G."/>
            <person name="Leclerc J.E."/>
            <person name="Ravel J."/>
            <person name="Cebula T.A."/>
        </authorList>
    </citation>
    <scope>NUCLEOTIDE SEQUENCE [LARGE SCALE GENOMIC DNA]</scope>
    <source>
        <strain>CT_02021853</strain>
    </source>
</reference>
<proteinExistence type="inferred from homology"/>